<accession>B5YZ24</accession>
<organism>
    <name type="scientific">Escherichia coli O157:H7 (strain EC4115 / EHEC)</name>
    <dbReference type="NCBI Taxonomy" id="444450"/>
    <lineage>
        <taxon>Bacteria</taxon>
        <taxon>Pseudomonadati</taxon>
        <taxon>Pseudomonadota</taxon>
        <taxon>Gammaproteobacteria</taxon>
        <taxon>Enterobacterales</taxon>
        <taxon>Enterobacteriaceae</taxon>
        <taxon>Escherichia</taxon>
    </lineage>
</organism>
<evidence type="ECO:0000255" key="1">
    <source>
        <dbReference type="HAMAP-Rule" id="MF_00518"/>
    </source>
</evidence>
<feature type="chain" id="PRO_1000127524" description="D-aminoacyl-tRNA deacylase">
    <location>
        <begin position="1"/>
        <end position="145"/>
    </location>
</feature>
<feature type="short sequence motif" description="Gly-cisPro motif, important for rejection of L-amino acids" evidence="1">
    <location>
        <begin position="137"/>
        <end position="138"/>
    </location>
</feature>
<reference key="1">
    <citation type="journal article" date="2011" name="Proc. Natl. Acad. Sci. U.S.A.">
        <title>Genomic anatomy of Escherichia coli O157:H7 outbreaks.</title>
        <authorList>
            <person name="Eppinger M."/>
            <person name="Mammel M.K."/>
            <person name="Leclerc J.E."/>
            <person name="Ravel J."/>
            <person name="Cebula T.A."/>
        </authorList>
    </citation>
    <scope>NUCLEOTIDE SEQUENCE [LARGE SCALE GENOMIC DNA]</scope>
    <source>
        <strain>EC4115 / EHEC</strain>
    </source>
</reference>
<dbReference type="EC" id="3.1.1.96" evidence="1"/>
<dbReference type="EMBL" id="CP001164">
    <property type="protein sequence ID" value="ACI34995.1"/>
    <property type="molecule type" value="Genomic_DNA"/>
</dbReference>
<dbReference type="RefSeq" id="WP_000560983.1">
    <property type="nucleotide sequence ID" value="NC_011353.1"/>
</dbReference>
<dbReference type="SMR" id="B5YZ24"/>
<dbReference type="GeneID" id="93778051"/>
<dbReference type="KEGG" id="ecf:ECH74115_5334"/>
<dbReference type="HOGENOM" id="CLU_076901_1_0_6"/>
<dbReference type="GO" id="GO:0005737">
    <property type="term" value="C:cytoplasm"/>
    <property type="evidence" value="ECO:0007669"/>
    <property type="project" value="UniProtKB-SubCell"/>
</dbReference>
<dbReference type="GO" id="GO:0051500">
    <property type="term" value="F:D-tyrosyl-tRNA(Tyr) deacylase activity"/>
    <property type="evidence" value="ECO:0007669"/>
    <property type="project" value="TreeGrafter"/>
</dbReference>
<dbReference type="GO" id="GO:0106026">
    <property type="term" value="F:Gly-tRNA(Ala) deacylase activity"/>
    <property type="evidence" value="ECO:0007669"/>
    <property type="project" value="UniProtKB-UniRule"/>
</dbReference>
<dbReference type="GO" id="GO:0043908">
    <property type="term" value="F:Ser(Gly)-tRNA(Ala) hydrolase activity"/>
    <property type="evidence" value="ECO:0007669"/>
    <property type="project" value="UniProtKB-UniRule"/>
</dbReference>
<dbReference type="GO" id="GO:0000049">
    <property type="term" value="F:tRNA binding"/>
    <property type="evidence" value="ECO:0007669"/>
    <property type="project" value="UniProtKB-UniRule"/>
</dbReference>
<dbReference type="GO" id="GO:0019478">
    <property type="term" value="P:D-amino acid catabolic process"/>
    <property type="evidence" value="ECO:0007669"/>
    <property type="project" value="UniProtKB-UniRule"/>
</dbReference>
<dbReference type="CDD" id="cd00563">
    <property type="entry name" value="Dtyr_deacylase"/>
    <property type="match status" value="1"/>
</dbReference>
<dbReference type="FunFam" id="3.50.80.10:FF:000001">
    <property type="entry name" value="D-aminoacyl-tRNA deacylase"/>
    <property type="match status" value="1"/>
</dbReference>
<dbReference type="Gene3D" id="3.50.80.10">
    <property type="entry name" value="D-tyrosyl-tRNA(Tyr) deacylase"/>
    <property type="match status" value="1"/>
</dbReference>
<dbReference type="HAMAP" id="MF_00518">
    <property type="entry name" value="Deacylase_Dtd"/>
    <property type="match status" value="1"/>
</dbReference>
<dbReference type="InterPro" id="IPR003732">
    <property type="entry name" value="Daa-tRNA_deacyls_DTD"/>
</dbReference>
<dbReference type="InterPro" id="IPR023509">
    <property type="entry name" value="DTD-like_sf"/>
</dbReference>
<dbReference type="NCBIfam" id="TIGR00256">
    <property type="entry name" value="D-aminoacyl-tRNA deacylase"/>
    <property type="match status" value="1"/>
</dbReference>
<dbReference type="PANTHER" id="PTHR10472:SF5">
    <property type="entry name" value="D-AMINOACYL-TRNA DEACYLASE 1"/>
    <property type="match status" value="1"/>
</dbReference>
<dbReference type="PANTHER" id="PTHR10472">
    <property type="entry name" value="D-TYROSYL-TRNA TYR DEACYLASE"/>
    <property type="match status" value="1"/>
</dbReference>
<dbReference type="Pfam" id="PF02580">
    <property type="entry name" value="Tyr_Deacylase"/>
    <property type="match status" value="1"/>
</dbReference>
<dbReference type="SUPFAM" id="SSF69500">
    <property type="entry name" value="DTD-like"/>
    <property type="match status" value="1"/>
</dbReference>
<protein>
    <recommendedName>
        <fullName evidence="1">D-aminoacyl-tRNA deacylase</fullName>
        <shortName evidence="1">DTD</shortName>
        <ecNumber evidence="1">3.1.1.96</ecNumber>
    </recommendedName>
    <alternativeName>
        <fullName evidence="1">Gly-tRNA(Ala) deacylase</fullName>
    </alternativeName>
</protein>
<sequence length="145" mass="15950">MIALIQRVTRASVTVEGEVTGEIGAGLLVLLGVEKDDDEQKANRLCERVLGYRIFSDAEGKMNLNVQQAGGSVLVVSQFTLAADTERGMRPSFSKGASPDRAEALYDYFVERCRQQEMNTQTGRFAADMQVSLVNDGPVTFWLQV</sequence>
<keyword id="KW-0963">Cytoplasm</keyword>
<keyword id="KW-0378">Hydrolase</keyword>
<keyword id="KW-0694">RNA-binding</keyword>
<keyword id="KW-0820">tRNA-binding</keyword>
<gene>
    <name evidence="1" type="primary">dtd</name>
    <name type="ordered locus">ECH74115_5334</name>
</gene>
<proteinExistence type="inferred from homology"/>
<name>DTD_ECO5E</name>
<comment type="function">
    <text evidence="1">An aminoacyl-tRNA editing enzyme that deacylates mischarged D-aminoacyl-tRNAs. Also deacylates mischarged glycyl-tRNA(Ala), protecting cells against glycine mischarging by AlaRS. Acts via tRNA-based rather than protein-based catalysis; rejects L-amino acids rather than detecting D-amino acids in the active site. By recycling D-aminoacyl-tRNA to D-amino acids and free tRNA molecules, this enzyme counteracts the toxicity associated with the formation of D-aminoacyl-tRNA entities in vivo and helps enforce protein L-homochirality.</text>
</comment>
<comment type="catalytic activity">
    <reaction evidence="1">
        <text>glycyl-tRNA(Ala) + H2O = tRNA(Ala) + glycine + H(+)</text>
        <dbReference type="Rhea" id="RHEA:53744"/>
        <dbReference type="Rhea" id="RHEA-COMP:9657"/>
        <dbReference type="Rhea" id="RHEA-COMP:13640"/>
        <dbReference type="ChEBI" id="CHEBI:15377"/>
        <dbReference type="ChEBI" id="CHEBI:15378"/>
        <dbReference type="ChEBI" id="CHEBI:57305"/>
        <dbReference type="ChEBI" id="CHEBI:78442"/>
        <dbReference type="ChEBI" id="CHEBI:78522"/>
        <dbReference type="EC" id="3.1.1.96"/>
    </reaction>
</comment>
<comment type="catalytic activity">
    <reaction evidence="1">
        <text>a D-aminoacyl-tRNA + H2O = a tRNA + a D-alpha-amino acid + H(+)</text>
        <dbReference type="Rhea" id="RHEA:13953"/>
        <dbReference type="Rhea" id="RHEA-COMP:10123"/>
        <dbReference type="Rhea" id="RHEA-COMP:10124"/>
        <dbReference type="ChEBI" id="CHEBI:15377"/>
        <dbReference type="ChEBI" id="CHEBI:15378"/>
        <dbReference type="ChEBI" id="CHEBI:59871"/>
        <dbReference type="ChEBI" id="CHEBI:78442"/>
        <dbReference type="ChEBI" id="CHEBI:79333"/>
        <dbReference type="EC" id="3.1.1.96"/>
    </reaction>
</comment>
<comment type="subunit">
    <text evidence="1">Homodimer.</text>
</comment>
<comment type="subcellular location">
    <subcellularLocation>
        <location evidence="1">Cytoplasm</location>
    </subcellularLocation>
</comment>
<comment type="domain">
    <text evidence="1">A Gly-cisPro motif from one monomer fits into the active site of the other monomer to allow specific chiral rejection of L-amino acids.</text>
</comment>
<comment type="similarity">
    <text evidence="1">Belongs to the DTD family.</text>
</comment>